<keyword id="KW-0001">2Fe-2S</keyword>
<keyword id="KW-0028">Amino-acid biosynthesis</keyword>
<keyword id="KW-0100">Branched-chain amino acid biosynthesis</keyword>
<keyword id="KW-0408">Iron</keyword>
<keyword id="KW-0411">Iron-sulfur</keyword>
<keyword id="KW-0456">Lyase</keyword>
<keyword id="KW-0460">Magnesium</keyword>
<keyword id="KW-0479">Metal-binding</keyword>
<reference key="1">
    <citation type="journal article" date="2007" name="PLoS Genet.">
        <title>Patterns and implications of gene gain and loss in the evolution of Prochlorococcus.</title>
        <authorList>
            <person name="Kettler G.C."/>
            <person name="Martiny A.C."/>
            <person name="Huang K."/>
            <person name="Zucker J."/>
            <person name="Coleman M.L."/>
            <person name="Rodrigue S."/>
            <person name="Chen F."/>
            <person name="Lapidus A."/>
            <person name="Ferriera S."/>
            <person name="Johnson J."/>
            <person name="Steglich C."/>
            <person name="Church G.M."/>
            <person name="Richardson P."/>
            <person name="Chisholm S.W."/>
        </authorList>
    </citation>
    <scope>NUCLEOTIDE SEQUENCE [LARGE SCALE GENOMIC DNA]</scope>
    <source>
        <strain>MIT 9303</strain>
    </source>
</reference>
<organism>
    <name type="scientific">Prochlorococcus marinus (strain MIT 9303)</name>
    <dbReference type="NCBI Taxonomy" id="59922"/>
    <lineage>
        <taxon>Bacteria</taxon>
        <taxon>Bacillati</taxon>
        <taxon>Cyanobacteriota</taxon>
        <taxon>Cyanophyceae</taxon>
        <taxon>Synechococcales</taxon>
        <taxon>Prochlorococcaceae</taxon>
        <taxon>Prochlorococcus</taxon>
    </lineage>
</organism>
<comment type="function">
    <text evidence="1">Functions in the biosynthesis of branched-chain amino acids. Catalyzes the dehydration of (2R,3R)-2,3-dihydroxy-3-methylpentanoate (2,3-dihydroxy-3-methylvalerate) into 2-oxo-3-methylpentanoate (2-oxo-3-methylvalerate) and of (2R)-2,3-dihydroxy-3-methylbutanoate (2,3-dihydroxyisovalerate) into 2-oxo-3-methylbutanoate (2-oxoisovalerate), the penultimate precursor to L-isoleucine and L-valine, respectively.</text>
</comment>
<comment type="catalytic activity">
    <reaction evidence="1">
        <text>(2R)-2,3-dihydroxy-3-methylbutanoate = 3-methyl-2-oxobutanoate + H2O</text>
        <dbReference type="Rhea" id="RHEA:24809"/>
        <dbReference type="ChEBI" id="CHEBI:11851"/>
        <dbReference type="ChEBI" id="CHEBI:15377"/>
        <dbReference type="ChEBI" id="CHEBI:49072"/>
        <dbReference type="EC" id="4.2.1.9"/>
    </reaction>
    <physiologicalReaction direction="left-to-right" evidence="1">
        <dbReference type="Rhea" id="RHEA:24810"/>
    </physiologicalReaction>
</comment>
<comment type="catalytic activity">
    <reaction evidence="1">
        <text>(2R,3R)-2,3-dihydroxy-3-methylpentanoate = (S)-3-methyl-2-oxopentanoate + H2O</text>
        <dbReference type="Rhea" id="RHEA:27694"/>
        <dbReference type="ChEBI" id="CHEBI:15377"/>
        <dbReference type="ChEBI" id="CHEBI:35146"/>
        <dbReference type="ChEBI" id="CHEBI:49258"/>
        <dbReference type="EC" id="4.2.1.9"/>
    </reaction>
    <physiologicalReaction direction="left-to-right" evidence="1">
        <dbReference type="Rhea" id="RHEA:27695"/>
    </physiologicalReaction>
</comment>
<comment type="cofactor">
    <cofactor evidence="1">
        <name>[2Fe-2S] cluster</name>
        <dbReference type="ChEBI" id="CHEBI:190135"/>
    </cofactor>
    <text evidence="1">Binds 1 [2Fe-2S] cluster per subunit. This cluster acts as a Lewis acid cofactor.</text>
</comment>
<comment type="cofactor">
    <cofactor evidence="1">
        <name>Mg(2+)</name>
        <dbReference type="ChEBI" id="CHEBI:18420"/>
    </cofactor>
</comment>
<comment type="pathway">
    <text evidence="1">Amino-acid biosynthesis; L-isoleucine biosynthesis; L-isoleucine from 2-oxobutanoate: step 3/4.</text>
</comment>
<comment type="pathway">
    <text evidence="1">Amino-acid biosynthesis; L-valine biosynthesis; L-valine from pyruvate: step 3/4.</text>
</comment>
<comment type="subunit">
    <text evidence="1">Homodimer.</text>
</comment>
<comment type="similarity">
    <text evidence="1">Belongs to the IlvD/Edd family.</text>
</comment>
<name>ILVD_PROM3</name>
<dbReference type="EC" id="4.2.1.9" evidence="1"/>
<dbReference type="EMBL" id="CP000554">
    <property type="protein sequence ID" value="ABM78436.1"/>
    <property type="molecule type" value="Genomic_DNA"/>
</dbReference>
<dbReference type="RefSeq" id="WP_011826324.1">
    <property type="nucleotide sequence ID" value="NC_008820.1"/>
</dbReference>
<dbReference type="SMR" id="A2CAC6"/>
<dbReference type="STRING" id="59922.P9303_16921"/>
<dbReference type="KEGG" id="pmf:P9303_16921"/>
<dbReference type="HOGENOM" id="CLU_014271_4_2_3"/>
<dbReference type="BioCyc" id="PMAR59922:G1G80-1470-MONOMER"/>
<dbReference type="UniPathway" id="UPA00047">
    <property type="reaction ID" value="UER00057"/>
</dbReference>
<dbReference type="UniPathway" id="UPA00049">
    <property type="reaction ID" value="UER00061"/>
</dbReference>
<dbReference type="Proteomes" id="UP000002274">
    <property type="component" value="Chromosome"/>
</dbReference>
<dbReference type="GO" id="GO:0051537">
    <property type="term" value="F:2 iron, 2 sulfur cluster binding"/>
    <property type="evidence" value="ECO:0007669"/>
    <property type="project" value="UniProtKB-UniRule"/>
</dbReference>
<dbReference type="GO" id="GO:0004160">
    <property type="term" value="F:dihydroxy-acid dehydratase activity"/>
    <property type="evidence" value="ECO:0007669"/>
    <property type="project" value="UniProtKB-UniRule"/>
</dbReference>
<dbReference type="GO" id="GO:0000287">
    <property type="term" value="F:magnesium ion binding"/>
    <property type="evidence" value="ECO:0007669"/>
    <property type="project" value="UniProtKB-UniRule"/>
</dbReference>
<dbReference type="GO" id="GO:0009097">
    <property type="term" value="P:isoleucine biosynthetic process"/>
    <property type="evidence" value="ECO:0007669"/>
    <property type="project" value="UniProtKB-UniRule"/>
</dbReference>
<dbReference type="GO" id="GO:0009099">
    <property type="term" value="P:L-valine biosynthetic process"/>
    <property type="evidence" value="ECO:0007669"/>
    <property type="project" value="UniProtKB-UniRule"/>
</dbReference>
<dbReference type="FunFam" id="3.50.30.80:FF:000001">
    <property type="entry name" value="Dihydroxy-acid dehydratase"/>
    <property type="match status" value="1"/>
</dbReference>
<dbReference type="Gene3D" id="3.50.30.80">
    <property type="entry name" value="IlvD/EDD C-terminal domain-like"/>
    <property type="match status" value="1"/>
</dbReference>
<dbReference type="HAMAP" id="MF_00012">
    <property type="entry name" value="IlvD"/>
    <property type="match status" value="1"/>
</dbReference>
<dbReference type="InterPro" id="IPR050165">
    <property type="entry name" value="DHAD_IlvD/Edd"/>
</dbReference>
<dbReference type="InterPro" id="IPR042096">
    <property type="entry name" value="Dihydro-acid_dehy_C"/>
</dbReference>
<dbReference type="InterPro" id="IPR004404">
    <property type="entry name" value="DihydroxyA_deHydtase"/>
</dbReference>
<dbReference type="InterPro" id="IPR020558">
    <property type="entry name" value="DiOHA_6PGluconate_deHydtase_CS"/>
</dbReference>
<dbReference type="InterPro" id="IPR056740">
    <property type="entry name" value="ILV_EDD_C"/>
</dbReference>
<dbReference type="InterPro" id="IPR000581">
    <property type="entry name" value="ILV_EDD_N"/>
</dbReference>
<dbReference type="InterPro" id="IPR037237">
    <property type="entry name" value="IlvD/EDD_N"/>
</dbReference>
<dbReference type="NCBIfam" id="TIGR00110">
    <property type="entry name" value="ilvD"/>
    <property type="match status" value="1"/>
</dbReference>
<dbReference type="NCBIfam" id="NF002068">
    <property type="entry name" value="PRK00911.1"/>
    <property type="match status" value="1"/>
</dbReference>
<dbReference type="PANTHER" id="PTHR21000">
    <property type="entry name" value="DIHYDROXY-ACID DEHYDRATASE DAD"/>
    <property type="match status" value="1"/>
</dbReference>
<dbReference type="PANTHER" id="PTHR21000:SF5">
    <property type="entry name" value="DIHYDROXY-ACID DEHYDRATASE, MITOCHONDRIAL"/>
    <property type="match status" value="1"/>
</dbReference>
<dbReference type="Pfam" id="PF24877">
    <property type="entry name" value="ILV_EDD_C"/>
    <property type="match status" value="1"/>
</dbReference>
<dbReference type="Pfam" id="PF00920">
    <property type="entry name" value="ILVD_EDD_N"/>
    <property type="match status" value="1"/>
</dbReference>
<dbReference type="SUPFAM" id="SSF143975">
    <property type="entry name" value="IlvD/EDD N-terminal domain-like"/>
    <property type="match status" value="1"/>
</dbReference>
<dbReference type="SUPFAM" id="SSF52016">
    <property type="entry name" value="LeuD/IlvD-like"/>
    <property type="match status" value="1"/>
</dbReference>
<dbReference type="PROSITE" id="PS00886">
    <property type="entry name" value="ILVD_EDD_1"/>
    <property type="match status" value="1"/>
</dbReference>
<dbReference type="PROSITE" id="PS00887">
    <property type="entry name" value="ILVD_EDD_2"/>
    <property type="match status" value="1"/>
</dbReference>
<feature type="chain" id="PRO_1000001028" description="Dihydroxy-acid dehydratase">
    <location>
        <begin position="1"/>
        <end position="556"/>
    </location>
</feature>
<feature type="active site" description="Proton acceptor" evidence="1">
    <location>
        <position position="470"/>
    </location>
</feature>
<feature type="binding site" evidence="1">
    <location>
        <position position="47"/>
    </location>
    <ligand>
        <name>[2Fe-2S] cluster</name>
        <dbReference type="ChEBI" id="CHEBI:190135"/>
    </ligand>
</feature>
<feature type="binding site" evidence="1">
    <location>
        <position position="79"/>
    </location>
    <ligand>
        <name>Mg(2+)</name>
        <dbReference type="ChEBI" id="CHEBI:18420"/>
    </ligand>
</feature>
<feature type="binding site" evidence="1">
    <location>
        <position position="120"/>
    </location>
    <ligand>
        <name>[2Fe-2S] cluster</name>
        <dbReference type="ChEBI" id="CHEBI:190135"/>
    </ligand>
</feature>
<feature type="binding site" evidence="1">
    <location>
        <position position="121"/>
    </location>
    <ligand>
        <name>Mg(2+)</name>
        <dbReference type="ChEBI" id="CHEBI:18420"/>
    </ligand>
</feature>
<feature type="binding site" description="via carbamate group" evidence="1">
    <location>
        <position position="122"/>
    </location>
    <ligand>
        <name>Mg(2+)</name>
        <dbReference type="ChEBI" id="CHEBI:18420"/>
    </ligand>
</feature>
<feature type="binding site" evidence="1">
    <location>
        <position position="192"/>
    </location>
    <ligand>
        <name>[2Fe-2S] cluster</name>
        <dbReference type="ChEBI" id="CHEBI:190135"/>
    </ligand>
</feature>
<feature type="binding site" evidence="1">
    <location>
        <position position="444"/>
    </location>
    <ligand>
        <name>Mg(2+)</name>
        <dbReference type="ChEBI" id="CHEBI:18420"/>
    </ligand>
</feature>
<feature type="modified residue" description="N6-carboxylysine" evidence="1">
    <location>
        <position position="122"/>
    </location>
</feature>
<evidence type="ECO:0000255" key="1">
    <source>
        <dbReference type="HAMAP-Rule" id="MF_00012"/>
    </source>
</evidence>
<proteinExistence type="inferred from homology"/>
<protein>
    <recommendedName>
        <fullName evidence="1">Dihydroxy-acid dehydratase</fullName>
        <shortName evidence="1">DAD</shortName>
        <ecNumber evidence="1">4.2.1.9</ecNumber>
    </recommendedName>
</protein>
<accession>A2CAC6</accession>
<gene>
    <name evidence="1" type="primary">ilvD</name>
    <name type="ordered locus">P9303_16921</name>
</gene>
<sequence length="556" mass="58127">MLRSAAITKGTQRSPNRAMLRAVGFGDEDFNKPIIGIANGYSTITPCNIGLNDLARRSEEAARQAGAMPQMFGTITVSDGISMGTEGMKYSLVSREVIADSIETACNAQSMDGVLAIGGCDKNMPGAMIALARMNIPGVFVYGGTIKPGKLADRDLTVVSAFEAVGQHASGKINEEQLTAIEKNACPGAGSCGGMFTANTMSAAIETLGLSLPYSSTMAAEDEEKANSAARSAEVLVDAIKANICPLDLLTKNAFENAISVVMAVGGSTNAVLHLLAIARSAGVDLCIDDFERIRQRVPVICDLKPSGRYVTVDLHKAGGIPQVMKQLLDAGLLHGDCCNVEGKTLRELLKDVPSEPSAEQDVIHPLSKPVYAKGHLAILKGNLASEGCVAKISGIKTPVLTGPARVFESEEACLAAILNNKVKAGDVVVIRNEGPVGGPGMREMLAPTSAIVGADLGDKVALITDGRFSGGTYGLVVGHVAPEAAVGGMIGLVHEGDSITIDADQLLIQLNIENDELERRSSAWKKPQPRYQTGVLGKYARMVSSSSKGAVTDQP</sequence>